<sequence>MNFNKIDLDNWKRKEIFNHYLNQQTTFSITTEIDISVLYRNIKQEGYKFYPAFIFLVTRVINSNTAFRTGYNSDGELGYWDKLEPLYTIFDGVSKTFSGIWTPVKNDFKEFYDLYLSDVEKYNGSGKLFPKTPIPENAFSLSIIPWTSFTGFNLNINNNSNYLLPIITAGKFINKGNSIYLPLSLQVHHSVCDGYHAGLFMNSIQELSDRPNDWLL</sequence>
<accession>P00485</accession>
<keyword id="KW-0012">Acyltransferase</keyword>
<keyword id="KW-0046">Antibiotic resistance</keyword>
<keyword id="KW-0614">Plasmid</keyword>
<keyword id="KW-0808">Transferase</keyword>
<comment type="function">
    <text>This enzyme is an effector of chloramphenicol resistance in bacteria.</text>
</comment>
<comment type="catalytic activity">
    <reaction evidence="1">
        <text>chloramphenicol + acetyl-CoA = chloramphenicol 3-acetate + CoA</text>
        <dbReference type="Rhea" id="RHEA:18421"/>
        <dbReference type="ChEBI" id="CHEBI:16730"/>
        <dbReference type="ChEBI" id="CHEBI:17698"/>
        <dbReference type="ChEBI" id="CHEBI:57287"/>
        <dbReference type="ChEBI" id="CHEBI:57288"/>
        <dbReference type="EC" id="2.3.1.28"/>
    </reaction>
</comment>
<comment type="subunit">
    <text>Homotrimer.</text>
</comment>
<comment type="induction">
    <text>By subinhibitory concentrations of chloramphenicol.</text>
</comment>
<comment type="similarity">
    <text evidence="2">Belongs to the chloramphenicol acetyltransferase family.</text>
</comment>
<organism>
    <name type="scientific">Staphylococcus aureus</name>
    <dbReference type="NCBI Taxonomy" id="1280"/>
    <lineage>
        <taxon>Bacteria</taxon>
        <taxon>Bacillati</taxon>
        <taxon>Bacillota</taxon>
        <taxon>Bacilli</taxon>
        <taxon>Bacillales</taxon>
        <taxon>Staphylococcaceae</taxon>
        <taxon>Staphylococcus</taxon>
    </lineage>
</organism>
<proteinExistence type="evidence at transcript level"/>
<name>CAT1_STAAU</name>
<reference key="1">
    <citation type="journal article" date="1982" name="J. Bacteriol.">
        <title>Nucleotide sequence and functional map of pC194, a plasmid that specifies inducible chloramphenicol resistance.</title>
        <authorList>
            <person name="Horinouchi S."/>
            <person name="Weisblum B."/>
        </authorList>
    </citation>
    <scope>NUCLEOTIDE SEQUENCE [GENOMIC DNA]</scope>
    <source>
        <plasmid>pC194</plasmid>
    </source>
</reference>
<reference key="2">
    <citation type="journal article" date="1984" name="J. Bacteriol.">
        <title>Post-transcriptional regulation of chloramphenicol acetyl transferase.</title>
        <authorList>
            <person name="Byeon W.-H."/>
            <person name="Weisblum B."/>
        </authorList>
    </citation>
    <scope>NUCLEOTIDE SEQUENCE [GENOMIC DNA]</scope>
    <source>
        <plasmid>pC194</plasmid>
    </source>
</reference>
<reference key="3">
    <citation type="journal article" date="1990" name="Nucleic Acids Res.">
        <title>The Gram-positive cloning vector pBD64 arose by a 1844 bp deletion of pC194 derived DNA.</title>
        <authorList>
            <person name="Minton N.P."/>
            <person name="Swinfield T.-J."/>
            <person name="Brehm J.K."/>
            <person name="Oultram J.D."/>
        </authorList>
    </citation>
    <scope>NUCLEOTIDE SEQUENCE [GENOMIC DNA]</scope>
    <source>
        <plasmid>pCB64</plasmid>
    </source>
</reference>
<gene>
    <name type="primary">cat</name>
</gene>
<dbReference type="EC" id="2.3.1.28"/>
<dbReference type="EMBL" id="V01277">
    <property type="protein sequence ID" value="CAA24586.1"/>
    <property type="molecule type" value="Genomic_DNA"/>
</dbReference>
<dbReference type="EMBL" id="K01998">
    <property type="protein sequence ID" value="AAA92251.1"/>
    <property type="molecule type" value="Genomic_DNA"/>
</dbReference>
<dbReference type="EMBL" id="X51450">
    <property type="protein sequence ID" value="CAA35816.1"/>
    <property type="molecule type" value="Other_DNA"/>
</dbReference>
<dbReference type="PIR" id="A00568">
    <property type="entry name" value="XXSACC"/>
</dbReference>
<dbReference type="RefSeq" id="NP_040437.1">
    <property type="nucleotide sequence ID" value="NC_002013.1"/>
</dbReference>
<dbReference type="RefSeq" id="WP_001010387.1">
    <property type="nucleotide sequence ID" value="NC_021657.1"/>
</dbReference>
<dbReference type="RefSeq" id="YP_001718362.1">
    <property type="nucleotide sequence ID" value="NC_010426.1"/>
</dbReference>
<dbReference type="RefSeq" id="YP_001718364.1">
    <property type="nucleotide sequence ID" value="NC_010427.1"/>
</dbReference>
<dbReference type="RefSeq" id="YP_006937524.1">
    <property type="nucleotide sequence ID" value="NC_013314.1"/>
</dbReference>
<dbReference type="RefSeq" id="YP_006958103.1">
    <property type="nucleotide sequence ID" value="NC_019140.1"/>
</dbReference>
<dbReference type="SMR" id="P00485"/>
<dbReference type="KEGG" id="ag:CAA24586"/>
<dbReference type="GO" id="GO:0008811">
    <property type="term" value="F:chloramphenicol O-acetyltransferase activity"/>
    <property type="evidence" value="ECO:0007669"/>
    <property type="project" value="UniProtKB-EC"/>
</dbReference>
<dbReference type="GO" id="GO:0046677">
    <property type="term" value="P:response to antibiotic"/>
    <property type="evidence" value="ECO:0007669"/>
    <property type="project" value="UniProtKB-KW"/>
</dbReference>
<dbReference type="Gene3D" id="3.30.559.10">
    <property type="entry name" value="Chloramphenicol acetyltransferase-like domain"/>
    <property type="match status" value="1"/>
</dbReference>
<dbReference type="InterPro" id="IPR023213">
    <property type="entry name" value="CAT-like_dom_sf"/>
</dbReference>
<dbReference type="InterPro" id="IPR018372">
    <property type="entry name" value="Chloramphenicol_AcTrfase_AS"/>
</dbReference>
<dbReference type="InterPro" id="IPR001707">
    <property type="entry name" value="Cmp_AcTrfase"/>
</dbReference>
<dbReference type="NCBIfam" id="NF000491">
    <property type="entry name" value="chloram_CatA"/>
    <property type="match status" value="1"/>
</dbReference>
<dbReference type="PANTHER" id="PTHR38474:SF2">
    <property type="entry name" value="CHLORAMPHENICOL ACETYLTRANSFERASE"/>
    <property type="match status" value="1"/>
</dbReference>
<dbReference type="PANTHER" id="PTHR38474">
    <property type="entry name" value="SLR0299 PROTEIN"/>
    <property type="match status" value="1"/>
</dbReference>
<dbReference type="Pfam" id="PF00302">
    <property type="entry name" value="CAT"/>
    <property type="match status" value="1"/>
</dbReference>
<dbReference type="PIRSF" id="PIRSF000440">
    <property type="entry name" value="CAT"/>
    <property type="match status" value="1"/>
</dbReference>
<dbReference type="SMART" id="SM01059">
    <property type="entry name" value="CAT"/>
    <property type="match status" value="1"/>
</dbReference>
<dbReference type="SUPFAM" id="SSF52777">
    <property type="entry name" value="CoA-dependent acyltransferases"/>
    <property type="match status" value="1"/>
</dbReference>
<dbReference type="PROSITE" id="PS00100">
    <property type="entry name" value="CAT"/>
    <property type="match status" value="1"/>
</dbReference>
<feature type="chain" id="PRO_0000165870" description="Chloramphenicol acetyltransferase">
    <location>
        <begin position="1"/>
        <end position="216"/>
    </location>
</feature>
<feature type="active site" description="Proton acceptor" evidence="1">
    <location>
        <position position="189"/>
    </location>
</feature>
<protein>
    <recommendedName>
        <fullName>Chloramphenicol acetyltransferase</fullName>
        <shortName>CAT</shortName>
        <ecNumber>2.3.1.28</ecNumber>
    </recommendedName>
</protein>
<geneLocation type="plasmid">
    <name>pC194</name>
</geneLocation>
<geneLocation type="plasmid">
    <name>pCB64</name>
</geneLocation>
<evidence type="ECO:0000255" key="1">
    <source>
        <dbReference type="PROSITE-ProRule" id="PRU10021"/>
    </source>
</evidence>
<evidence type="ECO:0000305" key="2"/>